<comment type="function">
    <text evidence="1">Hydrolyzes ribosome-free peptidyl-tRNAs (with 1 or more amino acids incorporated), which drop off the ribosome during protein synthesis, or as a result of ribosome stalling.</text>
</comment>
<comment type="function">
    <text evidence="1">Catalyzes the release of premature peptidyl moieties from peptidyl-tRNA molecules trapped in stalled 50S ribosomal subunits, and thus maintains levels of free tRNAs and 50S ribosomes.</text>
</comment>
<comment type="catalytic activity">
    <reaction evidence="1">
        <text>an N-acyl-L-alpha-aminoacyl-tRNA + H2O = an N-acyl-L-amino acid + a tRNA + H(+)</text>
        <dbReference type="Rhea" id="RHEA:54448"/>
        <dbReference type="Rhea" id="RHEA-COMP:10123"/>
        <dbReference type="Rhea" id="RHEA-COMP:13883"/>
        <dbReference type="ChEBI" id="CHEBI:15377"/>
        <dbReference type="ChEBI" id="CHEBI:15378"/>
        <dbReference type="ChEBI" id="CHEBI:59874"/>
        <dbReference type="ChEBI" id="CHEBI:78442"/>
        <dbReference type="ChEBI" id="CHEBI:138191"/>
        <dbReference type="EC" id="3.1.1.29"/>
    </reaction>
</comment>
<comment type="subunit">
    <text evidence="1">Monomer.</text>
</comment>
<comment type="subcellular location">
    <subcellularLocation>
        <location evidence="1">Cytoplasm</location>
    </subcellularLocation>
</comment>
<comment type="similarity">
    <text evidence="1">Belongs to the PTH family.</text>
</comment>
<sequence>MSSIKLIVGLANPGAEYAATRHNAGAWFVDRLAESYRQSLKEESKFFGYTSRLNLAGQDVRLLVPTTFMNLSGKAVAAMATFYRIQPDEILVAHDELDLLPGIAKLKLGGGHGGHNGLKDIISKLGNNPNFHRLRIGIGHPGDKSKVTGFVLGKPPMSEQTLIDEAIDEAVRCTEILMKEDMIKAMNRLHAFKAA</sequence>
<keyword id="KW-0963">Cytoplasm</keyword>
<keyword id="KW-0378">Hydrolase</keyword>
<keyword id="KW-1185">Reference proteome</keyword>
<keyword id="KW-0694">RNA-binding</keyword>
<keyword id="KW-0820">tRNA-binding</keyword>
<proteinExistence type="inferred from homology"/>
<organism>
    <name type="scientific">Pectobacterium atrosepticum (strain SCRI 1043 / ATCC BAA-672)</name>
    <name type="common">Erwinia carotovora subsp. atroseptica</name>
    <dbReference type="NCBI Taxonomy" id="218491"/>
    <lineage>
        <taxon>Bacteria</taxon>
        <taxon>Pseudomonadati</taxon>
        <taxon>Pseudomonadota</taxon>
        <taxon>Gammaproteobacteria</taxon>
        <taxon>Enterobacterales</taxon>
        <taxon>Pectobacteriaceae</taxon>
        <taxon>Pectobacterium</taxon>
    </lineage>
</organism>
<name>PTH_PECAS</name>
<reference key="1">
    <citation type="journal article" date="2004" name="Proc. Natl. Acad. Sci. U.S.A.">
        <title>Genome sequence of the enterobacterial phytopathogen Erwinia carotovora subsp. atroseptica and characterization of virulence factors.</title>
        <authorList>
            <person name="Bell K.S."/>
            <person name="Sebaihia M."/>
            <person name="Pritchard L."/>
            <person name="Holden M.T.G."/>
            <person name="Hyman L.J."/>
            <person name="Holeva M.C."/>
            <person name="Thomson N.R."/>
            <person name="Bentley S.D."/>
            <person name="Churcher L.J.C."/>
            <person name="Mungall K."/>
            <person name="Atkin R."/>
            <person name="Bason N."/>
            <person name="Brooks K."/>
            <person name="Chillingworth T."/>
            <person name="Clark K."/>
            <person name="Doggett J."/>
            <person name="Fraser A."/>
            <person name="Hance Z."/>
            <person name="Hauser H."/>
            <person name="Jagels K."/>
            <person name="Moule S."/>
            <person name="Norbertczak H."/>
            <person name="Ormond D."/>
            <person name="Price C."/>
            <person name="Quail M.A."/>
            <person name="Sanders M."/>
            <person name="Walker D."/>
            <person name="Whitehead S."/>
            <person name="Salmond G.P.C."/>
            <person name="Birch P.R.J."/>
            <person name="Parkhill J."/>
            <person name="Toth I.K."/>
        </authorList>
    </citation>
    <scope>NUCLEOTIDE SEQUENCE [LARGE SCALE GENOMIC DNA]</scope>
    <source>
        <strain>SCRI 1043 / ATCC BAA-672</strain>
    </source>
</reference>
<protein>
    <recommendedName>
        <fullName evidence="1">Peptidyl-tRNA hydrolase</fullName>
        <shortName evidence="1">Pth</shortName>
        <ecNumber evidence="1">3.1.1.29</ecNumber>
    </recommendedName>
</protein>
<feature type="chain" id="PRO_0000187739" description="Peptidyl-tRNA hydrolase">
    <location>
        <begin position="1"/>
        <end position="195"/>
    </location>
</feature>
<feature type="active site" description="Proton acceptor" evidence="1">
    <location>
        <position position="22"/>
    </location>
</feature>
<feature type="binding site" evidence="1">
    <location>
        <position position="17"/>
    </location>
    <ligand>
        <name>tRNA</name>
        <dbReference type="ChEBI" id="CHEBI:17843"/>
    </ligand>
</feature>
<feature type="binding site" evidence="1">
    <location>
        <position position="68"/>
    </location>
    <ligand>
        <name>tRNA</name>
        <dbReference type="ChEBI" id="CHEBI:17843"/>
    </ligand>
</feature>
<feature type="binding site" evidence="1">
    <location>
        <position position="70"/>
    </location>
    <ligand>
        <name>tRNA</name>
        <dbReference type="ChEBI" id="CHEBI:17843"/>
    </ligand>
</feature>
<feature type="binding site" evidence="1">
    <location>
        <position position="116"/>
    </location>
    <ligand>
        <name>tRNA</name>
        <dbReference type="ChEBI" id="CHEBI:17843"/>
    </ligand>
</feature>
<feature type="site" description="Discriminates between blocked and unblocked aminoacyl-tRNA" evidence="1">
    <location>
        <position position="12"/>
    </location>
</feature>
<feature type="site" description="Stabilizes the basic form of H active site to accept a proton" evidence="1">
    <location>
        <position position="95"/>
    </location>
</feature>
<evidence type="ECO:0000255" key="1">
    <source>
        <dbReference type="HAMAP-Rule" id="MF_00083"/>
    </source>
</evidence>
<gene>
    <name evidence="1" type="primary">pth</name>
    <name type="ordered locus">ECA2184</name>
</gene>
<accession>Q6D557</accession>
<dbReference type="EC" id="3.1.1.29" evidence="1"/>
<dbReference type="EMBL" id="BX950851">
    <property type="protein sequence ID" value="CAG75086.1"/>
    <property type="molecule type" value="Genomic_DNA"/>
</dbReference>
<dbReference type="RefSeq" id="WP_011093744.1">
    <property type="nucleotide sequence ID" value="NC_004547.2"/>
</dbReference>
<dbReference type="SMR" id="Q6D557"/>
<dbReference type="STRING" id="218491.ECA2184"/>
<dbReference type="GeneID" id="57209094"/>
<dbReference type="KEGG" id="eca:ECA2184"/>
<dbReference type="PATRIC" id="fig|218491.5.peg.2217"/>
<dbReference type="eggNOG" id="COG0193">
    <property type="taxonomic scope" value="Bacteria"/>
</dbReference>
<dbReference type="HOGENOM" id="CLU_062456_3_1_6"/>
<dbReference type="OrthoDB" id="9800507at2"/>
<dbReference type="Proteomes" id="UP000007966">
    <property type="component" value="Chromosome"/>
</dbReference>
<dbReference type="GO" id="GO:0005737">
    <property type="term" value="C:cytoplasm"/>
    <property type="evidence" value="ECO:0007669"/>
    <property type="project" value="UniProtKB-SubCell"/>
</dbReference>
<dbReference type="GO" id="GO:0004045">
    <property type="term" value="F:peptidyl-tRNA hydrolase activity"/>
    <property type="evidence" value="ECO:0007669"/>
    <property type="project" value="UniProtKB-UniRule"/>
</dbReference>
<dbReference type="GO" id="GO:0000049">
    <property type="term" value="F:tRNA binding"/>
    <property type="evidence" value="ECO:0007669"/>
    <property type="project" value="UniProtKB-UniRule"/>
</dbReference>
<dbReference type="GO" id="GO:0006515">
    <property type="term" value="P:protein quality control for misfolded or incompletely synthesized proteins"/>
    <property type="evidence" value="ECO:0007669"/>
    <property type="project" value="UniProtKB-UniRule"/>
</dbReference>
<dbReference type="GO" id="GO:0072344">
    <property type="term" value="P:rescue of stalled ribosome"/>
    <property type="evidence" value="ECO:0007669"/>
    <property type="project" value="UniProtKB-UniRule"/>
</dbReference>
<dbReference type="CDD" id="cd00462">
    <property type="entry name" value="PTH"/>
    <property type="match status" value="1"/>
</dbReference>
<dbReference type="FunFam" id="3.40.50.1470:FF:000001">
    <property type="entry name" value="Peptidyl-tRNA hydrolase"/>
    <property type="match status" value="1"/>
</dbReference>
<dbReference type="Gene3D" id="3.40.50.1470">
    <property type="entry name" value="Peptidyl-tRNA hydrolase"/>
    <property type="match status" value="1"/>
</dbReference>
<dbReference type="HAMAP" id="MF_00083">
    <property type="entry name" value="Pept_tRNA_hydro_bact"/>
    <property type="match status" value="1"/>
</dbReference>
<dbReference type="InterPro" id="IPR001328">
    <property type="entry name" value="Pept_tRNA_hydro"/>
</dbReference>
<dbReference type="InterPro" id="IPR018171">
    <property type="entry name" value="Pept_tRNA_hydro_CS"/>
</dbReference>
<dbReference type="InterPro" id="IPR036416">
    <property type="entry name" value="Pept_tRNA_hydro_sf"/>
</dbReference>
<dbReference type="NCBIfam" id="TIGR00447">
    <property type="entry name" value="pth"/>
    <property type="match status" value="1"/>
</dbReference>
<dbReference type="PANTHER" id="PTHR17224">
    <property type="entry name" value="PEPTIDYL-TRNA HYDROLASE"/>
    <property type="match status" value="1"/>
</dbReference>
<dbReference type="PANTHER" id="PTHR17224:SF1">
    <property type="entry name" value="PEPTIDYL-TRNA HYDROLASE"/>
    <property type="match status" value="1"/>
</dbReference>
<dbReference type="Pfam" id="PF01195">
    <property type="entry name" value="Pept_tRNA_hydro"/>
    <property type="match status" value="1"/>
</dbReference>
<dbReference type="SUPFAM" id="SSF53178">
    <property type="entry name" value="Peptidyl-tRNA hydrolase-like"/>
    <property type="match status" value="1"/>
</dbReference>
<dbReference type="PROSITE" id="PS01195">
    <property type="entry name" value="PEPT_TRNA_HYDROL_1"/>
    <property type="match status" value="1"/>
</dbReference>
<dbReference type="PROSITE" id="PS01196">
    <property type="entry name" value="PEPT_TRNA_HYDROL_2"/>
    <property type="match status" value="1"/>
</dbReference>